<accession>A1ATH8</accession>
<keyword id="KW-1185">Reference proteome</keyword>
<keyword id="KW-0687">Ribonucleoprotein</keyword>
<keyword id="KW-0689">Ribosomal protein</keyword>
<dbReference type="EMBL" id="CP000482">
    <property type="protein sequence ID" value="ABL00649.1"/>
    <property type="molecule type" value="Genomic_DNA"/>
</dbReference>
<dbReference type="RefSeq" id="WP_011736884.1">
    <property type="nucleotide sequence ID" value="NC_008609.1"/>
</dbReference>
<dbReference type="SMR" id="A1ATH8"/>
<dbReference type="STRING" id="338966.Ppro_3053"/>
<dbReference type="KEGG" id="ppd:Ppro_3053"/>
<dbReference type="eggNOG" id="COG0828">
    <property type="taxonomic scope" value="Bacteria"/>
</dbReference>
<dbReference type="HOGENOM" id="CLU_159258_1_2_7"/>
<dbReference type="OrthoDB" id="9799244at2"/>
<dbReference type="Proteomes" id="UP000006732">
    <property type="component" value="Chromosome"/>
</dbReference>
<dbReference type="GO" id="GO:1990904">
    <property type="term" value="C:ribonucleoprotein complex"/>
    <property type="evidence" value="ECO:0007669"/>
    <property type="project" value="UniProtKB-KW"/>
</dbReference>
<dbReference type="GO" id="GO:0005840">
    <property type="term" value="C:ribosome"/>
    <property type="evidence" value="ECO:0007669"/>
    <property type="project" value="UniProtKB-KW"/>
</dbReference>
<dbReference type="GO" id="GO:0003735">
    <property type="term" value="F:structural constituent of ribosome"/>
    <property type="evidence" value="ECO:0007669"/>
    <property type="project" value="InterPro"/>
</dbReference>
<dbReference type="GO" id="GO:0006412">
    <property type="term" value="P:translation"/>
    <property type="evidence" value="ECO:0007669"/>
    <property type="project" value="UniProtKB-UniRule"/>
</dbReference>
<dbReference type="Gene3D" id="1.20.5.1150">
    <property type="entry name" value="Ribosomal protein S8"/>
    <property type="match status" value="1"/>
</dbReference>
<dbReference type="HAMAP" id="MF_00358">
    <property type="entry name" value="Ribosomal_bS21"/>
    <property type="match status" value="1"/>
</dbReference>
<dbReference type="InterPro" id="IPR001911">
    <property type="entry name" value="Ribosomal_bS21"/>
</dbReference>
<dbReference type="InterPro" id="IPR038380">
    <property type="entry name" value="Ribosomal_bS21_sf"/>
</dbReference>
<dbReference type="NCBIfam" id="TIGR00030">
    <property type="entry name" value="S21p"/>
    <property type="match status" value="1"/>
</dbReference>
<dbReference type="PANTHER" id="PTHR21109">
    <property type="entry name" value="MITOCHONDRIAL 28S RIBOSOMAL PROTEIN S21"/>
    <property type="match status" value="1"/>
</dbReference>
<dbReference type="PANTHER" id="PTHR21109:SF22">
    <property type="entry name" value="SMALL RIBOSOMAL SUBUNIT PROTEIN BS21"/>
    <property type="match status" value="1"/>
</dbReference>
<dbReference type="Pfam" id="PF01165">
    <property type="entry name" value="Ribosomal_S21"/>
    <property type="match status" value="1"/>
</dbReference>
<dbReference type="PRINTS" id="PR00976">
    <property type="entry name" value="RIBOSOMALS21"/>
</dbReference>
<feature type="chain" id="PRO_1000005147" description="Small ribosomal subunit protein bS21">
    <location>
        <begin position="1"/>
        <end position="65"/>
    </location>
</feature>
<feature type="region of interest" description="Disordered" evidence="2">
    <location>
        <begin position="39"/>
        <end position="65"/>
    </location>
</feature>
<feature type="compositionally biased region" description="Basic residues" evidence="2">
    <location>
        <begin position="43"/>
        <end position="65"/>
    </location>
</feature>
<protein>
    <recommendedName>
        <fullName evidence="1">Small ribosomal subunit protein bS21</fullName>
    </recommendedName>
    <alternativeName>
        <fullName evidence="3">30S ribosomal protein S21</fullName>
    </alternativeName>
</protein>
<gene>
    <name evidence="1" type="primary">rpsU</name>
    <name type="ordered locus">Ppro_3053</name>
</gene>
<sequence length="65" mass="7667">MPGVKVKESEPFELALKKFKKQCEKAGILSEVRKREHFEKPSIKRKKKAIAARKRALKKQRKMMD</sequence>
<evidence type="ECO:0000255" key="1">
    <source>
        <dbReference type="HAMAP-Rule" id="MF_00358"/>
    </source>
</evidence>
<evidence type="ECO:0000256" key="2">
    <source>
        <dbReference type="SAM" id="MobiDB-lite"/>
    </source>
</evidence>
<evidence type="ECO:0000305" key="3"/>
<proteinExistence type="inferred from homology"/>
<organism>
    <name type="scientific">Pelobacter propionicus (strain DSM 2379 / NBRC 103807 / OttBd1)</name>
    <dbReference type="NCBI Taxonomy" id="338966"/>
    <lineage>
        <taxon>Bacteria</taxon>
        <taxon>Pseudomonadati</taxon>
        <taxon>Thermodesulfobacteriota</taxon>
        <taxon>Desulfuromonadia</taxon>
        <taxon>Desulfuromonadales</taxon>
        <taxon>Desulfuromonadaceae</taxon>
        <taxon>Pelobacter</taxon>
    </lineage>
</organism>
<name>RS21_PELPD</name>
<comment type="similarity">
    <text evidence="1">Belongs to the bacterial ribosomal protein bS21 family.</text>
</comment>
<reference key="1">
    <citation type="submission" date="2006-10" db="EMBL/GenBank/DDBJ databases">
        <title>Complete sequence of chromosome of Pelobacter propionicus DSM 2379.</title>
        <authorList>
            <consortium name="US DOE Joint Genome Institute"/>
            <person name="Copeland A."/>
            <person name="Lucas S."/>
            <person name="Lapidus A."/>
            <person name="Barry K."/>
            <person name="Detter J.C."/>
            <person name="Glavina del Rio T."/>
            <person name="Hammon N."/>
            <person name="Israni S."/>
            <person name="Dalin E."/>
            <person name="Tice H."/>
            <person name="Pitluck S."/>
            <person name="Saunders E."/>
            <person name="Brettin T."/>
            <person name="Bruce D."/>
            <person name="Han C."/>
            <person name="Tapia R."/>
            <person name="Schmutz J."/>
            <person name="Larimer F."/>
            <person name="Land M."/>
            <person name="Hauser L."/>
            <person name="Kyrpides N."/>
            <person name="Kim E."/>
            <person name="Lovley D."/>
            <person name="Richardson P."/>
        </authorList>
    </citation>
    <scope>NUCLEOTIDE SEQUENCE [LARGE SCALE GENOMIC DNA]</scope>
    <source>
        <strain>DSM 2379 / NBRC 103807 / OttBd1</strain>
    </source>
</reference>